<accession>C3KDX7</accession>
<evidence type="ECO:0000255" key="1">
    <source>
        <dbReference type="HAMAP-Rule" id="MF_00191"/>
    </source>
</evidence>
<proteinExistence type="inferred from homology"/>
<gene>
    <name evidence="1" type="primary">ispH</name>
    <name type="ordered locus">PFLU_0771</name>
</gene>
<dbReference type="EC" id="1.17.7.4" evidence="1"/>
<dbReference type="EMBL" id="AM181176">
    <property type="protein sequence ID" value="CAY47040.1"/>
    <property type="molecule type" value="Genomic_DNA"/>
</dbReference>
<dbReference type="RefSeq" id="WP_012722142.1">
    <property type="nucleotide sequence ID" value="NC_012660.1"/>
</dbReference>
<dbReference type="SMR" id="C3KDX7"/>
<dbReference type="STRING" id="294.SRM1_04899"/>
<dbReference type="GeneID" id="93462388"/>
<dbReference type="eggNOG" id="COG0761">
    <property type="taxonomic scope" value="Bacteria"/>
</dbReference>
<dbReference type="HOGENOM" id="CLU_027486_1_0_6"/>
<dbReference type="OrthoDB" id="9804068at2"/>
<dbReference type="UniPathway" id="UPA00056">
    <property type="reaction ID" value="UER00097"/>
</dbReference>
<dbReference type="UniPathway" id="UPA00059">
    <property type="reaction ID" value="UER00105"/>
</dbReference>
<dbReference type="GO" id="GO:0051539">
    <property type="term" value="F:4 iron, 4 sulfur cluster binding"/>
    <property type="evidence" value="ECO:0007669"/>
    <property type="project" value="UniProtKB-UniRule"/>
</dbReference>
<dbReference type="GO" id="GO:0051745">
    <property type="term" value="F:4-hydroxy-3-methylbut-2-enyl diphosphate reductase activity"/>
    <property type="evidence" value="ECO:0007669"/>
    <property type="project" value="UniProtKB-UniRule"/>
</dbReference>
<dbReference type="GO" id="GO:0046872">
    <property type="term" value="F:metal ion binding"/>
    <property type="evidence" value="ECO:0007669"/>
    <property type="project" value="UniProtKB-KW"/>
</dbReference>
<dbReference type="GO" id="GO:0050992">
    <property type="term" value="P:dimethylallyl diphosphate biosynthetic process"/>
    <property type="evidence" value="ECO:0007669"/>
    <property type="project" value="UniProtKB-UniRule"/>
</dbReference>
<dbReference type="GO" id="GO:0019288">
    <property type="term" value="P:isopentenyl diphosphate biosynthetic process, methylerythritol 4-phosphate pathway"/>
    <property type="evidence" value="ECO:0007669"/>
    <property type="project" value="UniProtKB-UniRule"/>
</dbReference>
<dbReference type="GO" id="GO:0016114">
    <property type="term" value="P:terpenoid biosynthetic process"/>
    <property type="evidence" value="ECO:0007669"/>
    <property type="project" value="UniProtKB-UniRule"/>
</dbReference>
<dbReference type="CDD" id="cd13944">
    <property type="entry name" value="lytB_ispH"/>
    <property type="match status" value="1"/>
</dbReference>
<dbReference type="Gene3D" id="3.40.50.11270">
    <property type="match status" value="1"/>
</dbReference>
<dbReference type="Gene3D" id="3.40.1010.20">
    <property type="entry name" value="4-hydroxy-3-methylbut-2-enyl diphosphate reductase, catalytic domain"/>
    <property type="match status" value="2"/>
</dbReference>
<dbReference type="HAMAP" id="MF_00191">
    <property type="entry name" value="IspH"/>
    <property type="match status" value="1"/>
</dbReference>
<dbReference type="InterPro" id="IPR003451">
    <property type="entry name" value="LytB/IspH"/>
</dbReference>
<dbReference type="NCBIfam" id="TIGR00216">
    <property type="entry name" value="ispH_lytB"/>
    <property type="match status" value="1"/>
</dbReference>
<dbReference type="NCBIfam" id="NF002188">
    <property type="entry name" value="PRK01045.1-2"/>
    <property type="match status" value="1"/>
</dbReference>
<dbReference type="NCBIfam" id="NF002190">
    <property type="entry name" value="PRK01045.1-4"/>
    <property type="match status" value="1"/>
</dbReference>
<dbReference type="PANTHER" id="PTHR30426">
    <property type="entry name" value="4-HYDROXY-3-METHYLBUT-2-ENYL DIPHOSPHATE REDUCTASE"/>
    <property type="match status" value="1"/>
</dbReference>
<dbReference type="PANTHER" id="PTHR30426:SF0">
    <property type="entry name" value="4-HYDROXY-3-METHYLBUT-2-ENYL DIPHOSPHATE REDUCTASE"/>
    <property type="match status" value="1"/>
</dbReference>
<dbReference type="Pfam" id="PF02401">
    <property type="entry name" value="LYTB"/>
    <property type="match status" value="1"/>
</dbReference>
<name>ISPH_PSEFS</name>
<organism>
    <name type="scientific">Pseudomonas fluorescens (strain SBW25)</name>
    <dbReference type="NCBI Taxonomy" id="216595"/>
    <lineage>
        <taxon>Bacteria</taxon>
        <taxon>Pseudomonadati</taxon>
        <taxon>Pseudomonadota</taxon>
        <taxon>Gammaproteobacteria</taxon>
        <taxon>Pseudomonadales</taxon>
        <taxon>Pseudomonadaceae</taxon>
        <taxon>Pseudomonas</taxon>
    </lineage>
</organism>
<reference key="1">
    <citation type="journal article" date="2009" name="Genome Biol.">
        <title>Genomic and genetic analyses of diversity and plant interactions of Pseudomonas fluorescens.</title>
        <authorList>
            <person name="Silby M.W."/>
            <person name="Cerdeno-Tarraga A.M."/>
            <person name="Vernikos G.S."/>
            <person name="Giddens S.R."/>
            <person name="Jackson R.W."/>
            <person name="Preston G.M."/>
            <person name="Zhang X.-X."/>
            <person name="Moon C.D."/>
            <person name="Gehrig S.M."/>
            <person name="Godfrey S.A.C."/>
            <person name="Knight C.G."/>
            <person name="Malone J.G."/>
            <person name="Robinson Z."/>
            <person name="Spiers A.J."/>
            <person name="Harris S."/>
            <person name="Challis G.L."/>
            <person name="Yaxley A.M."/>
            <person name="Harris D."/>
            <person name="Seeger K."/>
            <person name="Murphy L."/>
            <person name="Rutter S."/>
            <person name="Squares R."/>
            <person name="Quail M.A."/>
            <person name="Saunders E."/>
            <person name="Mavromatis K."/>
            <person name="Brettin T.S."/>
            <person name="Bentley S.D."/>
            <person name="Hothersall J."/>
            <person name="Stephens E."/>
            <person name="Thomas C.M."/>
            <person name="Parkhill J."/>
            <person name="Levy S.B."/>
            <person name="Rainey P.B."/>
            <person name="Thomson N.R."/>
        </authorList>
    </citation>
    <scope>NUCLEOTIDE SEQUENCE [LARGE SCALE GENOMIC DNA]</scope>
    <source>
        <strain>SBW25</strain>
    </source>
</reference>
<feature type="chain" id="PRO_1000204010" description="4-hydroxy-3-methylbut-2-enyl diphosphate reductase">
    <location>
        <begin position="1"/>
        <end position="315"/>
    </location>
</feature>
<feature type="active site" description="Proton donor" evidence="1">
    <location>
        <position position="126"/>
    </location>
</feature>
<feature type="binding site" evidence="1">
    <location>
        <position position="12"/>
    </location>
    <ligand>
        <name>[4Fe-4S] cluster</name>
        <dbReference type="ChEBI" id="CHEBI:49883"/>
    </ligand>
</feature>
<feature type="binding site" evidence="1">
    <location>
        <position position="41"/>
    </location>
    <ligand>
        <name>(2E)-4-hydroxy-3-methylbut-2-enyl diphosphate</name>
        <dbReference type="ChEBI" id="CHEBI:128753"/>
    </ligand>
</feature>
<feature type="binding site" evidence="1">
    <location>
        <position position="41"/>
    </location>
    <ligand>
        <name>dimethylallyl diphosphate</name>
        <dbReference type="ChEBI" id="CHEBI:57623"/>
    </ligand>
</feature>
<feature type="binding site" evidence="1">
    <location>
        <position position="41"/>
    </location>
    <ligand>
        <name>isopentenyl diphosphate</name>
        <dbReference type="ChEBI" id="CHEBI:128769"/>
    </ligand>
</feature>
<feature type="binding site" evidence="1">
    <location>
        <position position="74"/>
    </location>
    <ligand>
        <name>(2E)-4-hydroxy-3-methylbut-2-enyl diphosphate</name>
        <dbReference type="ChEBI" id="CHEBI:128753"/>
    </ligand>
</feature>
<feature type="binding site" evidence="1">
    <location>
        <position position="74"/>
    </location>
    <ligand>
        <name>dimethylallyl diphosphate</name>
        <dbReference type="ChEBI" id="CHEBI:57623"/>
    </ligand>
</feature>
<feature type="binding site" evidence="1">
    <location>
        <position position="74"/>
    </location>
    <ligand>
        <name>isopentenyl diphosphate</name>
        <dbReference type="ChEBI" id="CHEBI:128769"/>
    </ligand>
</feature>
<feature type="binding site" evidence="1">
    <location>
        <position position="96"/>
    </location>
    <ligand>
        <name>[4Fe-4S] cluster</name>
        <dbReference type="ChEBI" id="CHEBI:49883"/>
    </ligand>
</feature>
<feature type="binding site" evidence="1">
    <location>
        <position position="124"/>
    </location>
    <ligand>
        <name>(2E)-4-hydroxy-3-methylbut-2-enyl diphosphate</name>
        <dbReference type="ChEBI" id="CHEBI:128753"/>
    </ligand>
</feature>
<feature type="binding site" evidence="1">
    <location>
        <position position="124"/>
    </location>
    <ligand>
        <name>dimethylallyl diphosphate</name>
        <dbReference type="ChEBI" id="CHEBI:57623"/>
    </ligand>
</feature>
<feature type="binding site" evidence="1">
    <location>
        <position position="124"/>
    </location>
    <ligand>
        <name>isopentenyl diphosphate</name>
        <dbReference type="ChEBI" id="CHEBI:128769"/>
    </ligand>
</feature>
<feature type="binding site" evidence="1">
    <location>
        <position position="168"/>
    </location>
    <ligand>
        <name>(2E)-4-hydroxy-3-methylbut-2-enyl diphosphate</name>
        <dbReference type="ChEBI" id="CHEBI:128753"/>
    </ligand>
</feature>
<feature type="binding site" evidence="1">
    <location>
        <position position="198"/>
    </location>
    <ligand>
        <name>[4Fe-4S] cluster</name>
        <dbReference type="ChEBI" id="CHEBI:49883"/>
    </ligand>
</feature>
<feature type="binding site" evidence="1">
    <location>
        <position position="226"/>
    </location>
    <ligand>
        <name>(2E)-4-hydroxy-3-methylbut-2-enyl diphosphate</name>
        <dbReference type="ChEBI" id="CHEBI:128753"/>
    </ligand>
</feature>
<feature type="binding site" evidence="1">
    <location>
        <position position="226"/>
    </location>
    <ligand>
        <name>dimethylallyl diphosphate</name>
        <dbReference type="ChEBI" id="CHEBI:57623"/>
    </ligand>
</feature>
<feature type="binding site" evidence="1">
    <location>
        <position position="226"/>
    </location>
    <ligand>
        <name>isopentenyl diphosphate</name>
        <dbReference type="ChEBI" id="CHEBI:128769"/>
    </ligand>
</feature>
<feature type="binding site" evidence="1">
    <location>
        <position position="227"/>
    </location>
    <ligand>
        <name>(2E)-4-hydroxy-3-methylbut-2-enyl diphosphate</name>
        <dbReference type="ChEBI" id="CHEBI:128753"/>
    </ligand>
</feature>
<feature type="binding site" evidence="1">
    <location>
        <position position="227"/>
    </location>
    <ligand>
        <name>dimethylallyl diphosphate</name>
        <dbReference type="ChEBI" id="CHEBI:57623"/>
    </ligand>
</feature>
<feature type="binding site" evidence="1">
    <location>
        <position position="227"/>
    </location>
    <ligand>
        <name>isopentenyl diphosphate</name>
        <dbReference type="ChEBI" id="CHEBI:128769"/>
    </ligand>
</feature>
<feature type="binding site" evidence="1">
    <location>
        <position position="228"/>
    </location>
    <ligand>
        <name>(2E)-4-hydroxy-3-methylbut-2-enyl diphosphate</name>
        <dbReference type="ChEBI" id="CHEBI:128753"/>
    </ligand>
</feature>
<feature type="binding site" evidence="1">
    <location>
        <position position="228"/>
    </location>
    <ligand>
        <name>dimethylallyl diphosphate</name>
        <dbReference type="ChEBI" id="CHEBI:57623"/>
    </ligand>
</feature>
<feature type="binding site" evidence="1">
    <location>
        <position position="228"/>
    </location>
    <ligand>
        <name>isopentenyl diphosphate</name>
        <dbReference type="ChEBI" id="CHEBI:128769"/>
    </ligand>
</feature>
<feature type="binding site" evidence="1">
    <location>
        <position position="270"/>
    </location>
    <ligand>
        <name>(2E)-4-hydroxy-3-methylbut-2-enyl diphosphate</name>
        <dbReference type="ChEBI" id="CHEBI:128753"/>
    </ligand>
</feature>
<feature type="binding site" evidence="1">
    <location>
        <position position="270"/>
    </location>
    <ligand>
        <name>dimethylallyl diphosphate</name>
        <dbReference type="ChEBI" id="CHEBI:57623"/>
    </ligand>
</feature>
<feature type="binding site" evidence="1">
    <location>
        <position position="270"/>
    </location>
    <ligand>
        <name>isopentenyl diphosphate</name>
        <dbReference type="ChEBI" id="CHEBI:128769"/>
    </ligand>
</feature>
<protein>
    <recommendedName>
        <fullName evidence="1">4-hydroxy-3-methylbut-2-enyl diphosphate reductase</fullName>
        <shortName evidence="1">HMBPP reductase</shortName>
        <ecNumber evidence="1">1.17.7.4</ecNumber>
    </recommendedName>
</protein>
<keyword id="KW-0004">4Fe-4S</keyword>
<keyword id="KW-0408">Iron</keyword>
<keyword id="KW-0411">Iron-sulfur</keyword>
<keyword id="KW-0414">Isoprene biosynthesis</keyword>
<keyword id="KW-0479">Metal-binding</keyword>
<keyword id="KW-0560">Oxidoreductase</keyword>
<comment type="function">
    <text evidence="1">Catalyzes the conversion of 1-hydroxy-2-methyl-2-(E)-butenyl 4-diphosphate (HMBPP) into a mixture of isopentenyl diphosphate (IPP) and dimethylallyl diphosphate (DMAPP). Acts in the terminal step of the DOXP/MEP pathway for isoprenoid precursor biosynthesis.</text>
</comment>
<comment type="catalytic activity">
    <reaction evidence="1">
        <text>isopentenyl diphosphate + 2 oxidized [2Fe-2S]-[ferredoxin] + H2O = (2E)-4-hydroxy-3-methylbut-2-enyl diphosphate + 2 reduced [2Fe-2S]-[ferredoxin] + 2 H(+)</text>
        <dbReference type="Rhea" id="RHEA:24488"/>
        <dbReference type="Rhea" id="RHEA-COMP:10000"/>
        <dbReference type="Rhea" id="RHEA-COMP:10001"/>
        <dbReference type="ChEBI" id="CHEBI:15377"/>
        <dbReference type="ChEBI" id="CHEBI:15378"/>
        <dbReference type="ChEBI" id="CHEBI:33737"/>
        <dbReference type="ChEBI" id="CHEBI:33738"/>
        <dbReference type="ChEBI" id="CHEBI:128753"/>
        <dbReference type="ChEBI" id="CHEBI:128769"/>
        <dbReference type="EC" id="1.17.7.4"/>
    </reaction>
</comment>
<comment type="catalytic activity">
    <reaction evidence="1">
        <text>dimethylallyl diphosphate + 2 oxidized [2Fe-2S]-[ferredoxin] + H2O = (2E)-4-hydroxy-3-methylbut-2-enyl diphosphate + 2 reduced [2Fe-2S]-[ferredoxin] + 2 H(+)</text>
        <dbReference type="Rhea" id="RHEA:24825"/>
        <dbReference type="Rhea" id="RHEA-COMP:10000"/>
        <dbReference type="Rhea" id="RHEA-COMP:10001"/>
        <dbReference type="ChEBI" id="CHEBI:15377"/>
        <dbReference type="ChEBI" id="CHEBI:15378"/>
        <dbReference type="ChEBI" id="CHEBI:33737"/>
        <dbReference type="ChEBI" id="CHEBI:33738"/>
        <dbReference type="ChEBI" id="CHEBI:57623"/>
        <dbReference type="ChEBI" id="CHEBI:128753"/>
        <dbReference type="EC" id="1.17.7.4"/>
    </reaction>
</comment>
<comment type="cofactor">
    <cofactor evidence="1">
        <name>[4Fe-4S] cluster</name>
        <dbReference type="ChEBI" id="CHEBI:49883"/>
    </cofactor>
    <text evidence="1">Binds 1 [4Fe-4S] cluster per subunit.</text>
</comment>
<comment type="pathway">
    <text evidence="1">Isoprenoid biosynthesis; dimethylallyl diphosphate biosynthesis; dimethylallyl diphosphate from (2E)-4-hydroxy-3-methylbutenyl diphosphate: step 1/1.</text>
</comment>
<comment type="pathway">
    <text evidence="1">Isoprenoid biosynthesis; isopentenyl diphosphate biosynthesis via DXP pathway; isopentenyl diphosphate from 1-deoxy-D-xylulose 5-phosphate: step 6/6.</text>
</comment>
<comment type="similarity">
    <text evidence="1">Belongs to the IspH family.</text>
</comment>
<sequence>MQIKLANPRGFCAGVDRAIEIVNRALEVFGPPIYVRHEVVHNKFVVEDLRARGAIFVEELDQVPDDVIVIFSAHGVSQAVRTEAAGRGLKVFDATCPLVTKVHIEVARYSRDGRECILIGHAGHPEVEGTMGQYDASNGGAIYLVEDEKDVANLQVQNPERLAFVTQTTLSMDDTSRVIDALRSRFPAIGGPRKDDICYATQNRQDAVKQLADECDVVLVVGSPNSSNSNRLRELAERMATPAYLIDGAEDMQRSWFDGVERIGITAGASAPEVLVRGVIQQLHAWGATGADELAGREENITFSMPKELRVRSLL</sequence>